<proteinExistence type="inferred from homology"/>
<organism>
    <name type="scientific">Escherichia coli O8 (strain IAI1)</name>
    <dbReference type="NCBI Taxonomy" id="585034"/>
    <lineage>
        <taxon>Bacteria</taxon>
        <taxon>Pseudomonadati</taxon>
        <taxon>Pseudomonadota</taxon>
        <taxon>Gammaproteobacteria</taxon>
        <taxon>Enterobacterales</taxon>
        <taxon>Enterobacteriaceae</taxon>
        <taxon>Escherichia</taxon>
    </lineage>
</organism>
<keyword id="KW-0408">Iron</keyword>
<keyword id="KW-0479">Metal-binding</keyword>
<protein>
    <recommendedName>
        <fullName evidence="1">Iron-binding protein IscA</fullName>
    </recommendedName>
    <alternativeName>
        <fullName evidence="1">Iron-sulfur cluster assembly protein</fullName>
    </alternativeName>
</protein>
<gene>
    <name evidence="1" type="primary">iscA</name>
    <name type="ordered locus">ECIAI1_2580</name>
</gene>
<comment type="function">
    <text evidence="1">Is able to transfer iron-sulfur clusters to apo-ferredoxin. Multiple cycles of [2Fe2S] cluster formation and transfer are observed, suggesting that IscA acts catalytically. Recruits intracellular free iron so as to provide iron for the assembly of transient iron-sulfur cluster in IscU in the presence of IscS, L-cysteine and the thioredoxin reductase system TrxA/TrxB.</text>
</comment>
<comment type="cofactor">
    <cofactor evidence="1">
        <name>Fe cation</name>
        <dbReference type="ChEBI" id="CHEBI:24875"/>
    </cofactor>
    <text evidence="1">Binds 2 iron ions per dimer. The dimer may bind additional iron ions.</text>
</comment>
<comment type="subunit">
    <text evidence="1">Homodimer; may form tetramers and higher multimers.</text>
</comment>
<comment type="similarity">
    <text evidence="1">Belongs to the HesB/IscA family.</text>
</comment>
<name>ISCA_ECO8A</name>
<accession>B7M7N1</accession>
<reference key="1">
    <citation type="journal article" date="2009" name="PLoS Genet.">
        <title>Organised genome dynamics in the Escherichia coli species results in highly diverse adaptive paths.</title>
        <authorList>
            <person name="Touchon M."/>
            <person name="Hoede C."/>
            <person name="Tenaillon O."/>
            <person name="Barbe V."/>
            <person name="Baeriswyl S."/>
            <person name="Bidet P."/>
            <person name="Bingen E."/>
            <person name="Bonacorsi S."/>
            <person name="Bouchier C."/>
            <person name="Bouvet O."/>
            <person name="Calteau A."/>
            <person name="Chiapello H."/>
            <person name="Clermont O."/>
            <person name="Cruveiller S."/>
            <person name="Danchin A."/>
            <person name="Diard M."/>
            <person name="Dossat C."/>
            <person name="Karoui M.E."/>
            <person name="Frapy E."/>
            <person name="Garry L."/>
            <person name="Ghigo J.M."/>
            <person name="Gilles A.M."/>
            <person name="Johnson J."/>
            <person name="Le Bouguenec C."/>
            <person name="Lescat M."/>
            <person name="Mangenot S."/>
            <person name="Martinez-Jehanne V."/>
            <person name="Matic I."/>
            <person name="Nassif X."/>
            <person name="Oztas S."/>
            <person name="Petit M.A."/>
            <person name="Pichon C."/>
            <person name="Rouy Z."/>
            <person name="Ruf C.S."/>
            <person name="Schneider D."/>
            <person name="Tourret J."/>
            <person name="Vacherie B."/>
            <person name="Vallenet D."/>
            <person name="Medigue C."/>
            <person name="Rocha E.P.C."/>
            <person name="Denamur E."/>
        </authorList>
    </citation>
    <scope>NUCLEOTIDE SEQUENCE [LARGE SCALE GENOMIC DNA]</scope>
    <source>
        <strain>IAI1</strain>
    </source>
</reference>
<feature type="chain" id="PRO_1000145751" description="Iron-binding protein IscA">
    <location>
        <begin position="1"/>
        <end position="107"/>
    </location>
</feature>
<feature type="binding site" evidence="1">
    <location>
        <position position="35"/>
    </location>
    <ligand>
        <name>Fe cation</name>
        <dbReference type="ChEBI" id="CHEBI:24875"/>
    </ligand>
</feature>
<feature type="binding site" evidence="1">
    <location>
        <position position="99"/>
    </location>
    <ligand>
        <name>Fe cation</name>
        <dbReference type="ChEBI" id="CHEBI:24875"/>
    </ligand>
</feature>
<feature type="binding site" evidence="1">
    <location>
        <position position="101"/>
    </location>
    <ligand>
        <name>Fe cation</name>
        <dbReference type="ChEBI" id="CHEBI:24875"/>
    </ligand>
</feature>
<sequence length="107" mass="11556">MSITLSDSAAARVNTFLANRGKGFGLRLGVRTSGCSGMAYVLEFVDEPTPEDIVFEDKGVKVVVDGKSLQFLDGTQLDFVKEGLNEGFKFTNPNVKDECGCGESFHV</sequence>
<evidence type="ECO:0000255" key="1">
    <source>
        <dbReference type="HAMAP-Rule" id="MF_01429"/>
    </source>
</evidence>
<dbReference type="EMBL" id="CU928160">
    <property type="protein sequence ID" value="CAQ99419.1"/>
    <property type="molecule type" value="Genomic_DNA"/>
</dbReference>
<dbReference type="RefSeq" id="WP_000028953.1">
    <property type="nucleotide sequence ID" value="NC_011741.1"/>
</dbReference>
<dbReference type="SMR" id="B7M7N1"/>
<dbReference type="GeneID" id="93774608"/>
<dbReference type="KEGG" id="ecr:ECIAI1_2580"/>
<dbReference type="HOGENOM" id="CLU_069054_5_1_6"/>
<dbReference type="GO" id="GO:0005829">
    <property type="term" value="C:cytosol"/>
    <property type="evidence" value="ECO:0007669"/>
    <property type="project" value="TreeGrafter"/>
</dbReference>
<dbReference type="GO" id="GO:0051537">
    <property type="term" value="F:2 iron, 2 sulfur cluster binding"/>
    <property type="evidence" value="ECO:0007669"/>
    <property type="project" value="UniProtKB-ARBA"/>
</dbReference>
<dbReference type="GO" id="GO:0005506">
    <property type="term" value="F:iron ion binding"/>
    <property type="evidence" value="ECO:0007669"/>
    <property type="project" value="UniProtKB-UniRule"/>
</dbReference>
<dbReference type="GO" id="GO:0016226">
    <property type="term" value="P:iron-sulfur cluster assembly"/>
    <property type="evidence" value="ECO:0007669"/>
    <property type="project" value="UniProtKB-UniRule"/>
</dbReference>
<dbReference type="FunFam" id="2.60.300.12:FF:000001">
    <property type="entry name" value="Iron-binding protein IscA"/>
    <property type="match status" value="1"/>
</dbReference>
<dbReference type="Gene3D" id="2.60.300.12">
    <property type="entry name" value="HesB-like domain"/>
    <property type="match status" value="1"/>
</dbReference>
<dbReference type="HAMAP" id="MF_01429">
    <property type="entry name" value="Fe_S_insert_IscA"/>
    <property type="match status" value="1"/>
</dbReference>
<dbReference type="InterPro" id="IPR050322">
    <property type="entry name" value="Fe-S_cluster_asmbl/transfer"/>
</dbReference>
<dbReference type="InterPro" id="IPR000361">
    <property type="entry name" value="FeS_biogenesis"/>
</dbReference>
<dbReference type="InterPro" id="IPR016092">
    <property type="entry name" value="FeS_cluster_insertion"/>
</dbReference>
<dbReference type="InterPro" id="IPR017870">
    <property type="entry name" value="FeS_cluster_insertion_CS"/>
</dbReference>
<dbReference type="InterPro" id="IPR035903">
    <property type="entry name" value="HesB-like_dom_sf"/>
</dbReference>
<dbReference type="InterPro" id="IPR011302">
    <property type="entry name" value="IscA_proteobacteria"/>
</dbReference>
<dbReference type="NCBIfam" id="TIGR00049">
    <property type="entry name" value="iron-sulfur cluster assembly accessory protein"/>
    <property type="match status" value="1"/>
</dbReference>
<dbReference type="NCBIfam" id="TIGR02011">
    <property type="entry name" value="IscA"/>
    <property type="match status" value="1"/>
</dbReference>
<dbReference type="NCBIfam" id="NF007049">
    <property type="entry name" value="PRK09502.1"/>
    <property type="match status" value="1"/>
</dbReference>
<dbReference type="PANTHER" id="PTHR10072:SF41">
    <property type="entry name" value="IRON-SULFUR CLUSTER ASSEMBLY 1 HOMOLOG, MITOCHONDRIAL"/>
    <property type="match status" value="1"/>
</dbReference>
<dbReference type="PANTHER" id="PTHR10072">
    <property type="entry name" value="IRON-SULFUR CLUSTER ASSEMBLY PROTEIN"/>
    <property type="match status" value="1"/>
</dbReference>
<dbReference type="Pfam" id="PF01521">
    <property type="entry name" value="Fe-S_biosyn"/>
    <property type="match status" value="1"/>
</dbReference>
<dbReference type="SUPFAM" id="SSF89360">
    <property type="entry name" value="HesB-like domain"/>
    <property type="match status" value="1"/>
</dbReference>
<dbReference type="PROSITE" id="PS01152">
    <property type="entry name" value="HESB"/>
    <property type="match status" value="1"/>
</dbReference>